<evidence type="ECO:0000250" key="1">
    <source>
        <dbReference type="UniProtKB" id="P32969"/>
    </source>
</evidence>
<evidence type="ECO:0000305" key="2"/>
<gene>
    <name type="primary">RPL9</name>
    <name type="ORF">QnpA-15262</name>
</gene>
<name>RL9_MACFA</name>
<protein>
    <recommendedName>
        <fullName evidence="2">Large ribosomal subunit protein uL6</fullName>
    </recommendedName>
    <alternativeName>
        <fullName>60S ribosomal protein L9</fullName>
    </alternativeName>
</protein>
<accession>Q5IFJ7</accession>
<accession>Q4R5F1</accession>
<sequence>MKTILSNQTVDIPENVDITLKGRTVIVKGPRGTLRRDFNHINVELSLLGKKKKRLRVDKWWGNRKELATIRTICSHVQNMIKGVTLGFRYKMRSVYAHFPINVVIQENGSLVEIRNFLGEKYIRRVRMRPGVACSVSQAQKDELILEGNDIELVSNSAALIQQATTVKNKDIRKFLDGIYVSEKGTVQQADE</sequence>
<keyword id="KW-0007">Acetylation</keyword>
<keyword id="KW-0963">Cytoplasm</keyword>
<keyword id="KW-1185">Reference proteome</keyword>
<keyword id="KW-0687">Ribonucleoprotein</keyword>
<keyword id="KW-0689">Ribosomal protein</keyword>
<reference key="1">
    <citation type="journal article" date="2004" name="Cell">
        <title>Accelerated evolution of nervous system genes in the origin of Homo sapiens.</title>
        <authorList>
            <person name="Dorus S."/>
            <person name="Vallender E.J."/>
            <person name="Evans P.D."/>
            <person name="Anderson J.R."/>
            <person name="Gilbert S.L."/>
            <person name="Mahowald M."/>
            <person name="Wyckoff G.J."/>
            <person name="Malcom C.M."/>
            <person name="Lahn B.T."/>
        </authorList>
    </citation>
    <scope>NUCLEOTIDE SEQUENCE [MRNA]</scope>
</reference>
<reference key="2">
    <citation type="submission" date="2005-06" db="EMBL/GenBank/DDBJ databases">
        <title>DNA sequences of macaque genes expressed in brain or testis and its evolutionary implications.</title>
        <authorList>
            <consortium name="International consortium for macaque cDNA sequencing and analysis"/>
        </authorList>
    </citation>
    <scope>NUCLEOTIDE SEQUENCE [LARGE SCALE MRNA]</scope>
    <source>
        <tissue>Parietal cortex</tissue>
    </source>
</reference>
<proteinExistence type="evidence at transcript level"/>
<organism>
    <name type="scientific">Macaca fascicularis</name>
    <name type="common">Crab-eating macaque</name>
    <name type="synonym">Cynomolgus monkey</name>
    <dbReference type="NCBI Taxonomy" id="9541"/>
    <lineage>
        <taxon>Eukaryota</taxon>
        <taxon>Metazoa</taxon>
        <taxon>Chordata</taxon>
        <taxon>Craniata</taxon>
        <taxon>Vertebrata</taxon>
        <taxon>Euteleostomi</taxon>
        <taxon>Mammalia</taxon>
        <taxon>Eutheria</taxon>
        <taxon>Euarchontoglires</taxon>
        <taxon>Primates</taxon>
        <taxon>Haplorrhini</taxon>
        <taxon>Catarrhini</taxon>
        <taxon>Cercopithecidae</taxon>
        <taxon>Cercopithecinae</taxon>
        <taxon>Macaca</taxon>
    </lineage>
</organism>
<feature type="chain" id="PRO_0000131098" description="Large ribosomal subunit protein uL6">
    <location>
        <begin position="1"/>
        <end position="192"/>
    </location>
</feature>
<feature type="modified residue" description="N6-acetyllysine" evidence="1">
    <location>
        <position position="121"/>
    </location>
</feature>
<feature type="sequence conflict" description="In Ref. 2; BAE01674." evidence="2" ref="2">
    <original>I</original>
    <variation>V</variation>
    <location>
        <position position="70"/>
    </location>
</feature>
<dbReference type="EMBL" id="AY742820">
    <property type="protein sequence ID" value="AAW55578.1"/>
    <property type="molecule type" value="mRNA"/>
</dbReference>
<dbReference type="EMBL" id="AB169592">
    <property type="protein sequence ID" value="BAE01674.1"/>
    <property type="molecule type" value="mRNA"/>
</dbReference>
<dbReference type="RefSeq" id="NP_001271746.1">
    <property type="nucleotide sequence ID" value="NM_001284817.1"/>
</dbReference>
<dbReference type="RefSeq" id="XP_015305555.1">
    <property type="nucleotide sequence ID" value="XM_015450069.1"/>
</dbReference>
<dbReference type="SMR" id="Q5IFJ7"/>
<dbReference type="STRING" id="9541.ENSMFAP00000033306"/>
<dbReference type="eggNOG" id="KOG3255">
    <property type="taxonomic scope" value="Eukaryota"/>
</dbReference>
<dbReference type="Proteomes" id="UP000233100">
    <property type="component" value="Unplaced"/>
</dbReference>
<dbReference type="GO" id="GO:0022625">
    <property type="term" value="C:cytosolic large ribosomal subunit"/>
    <property type="evidence" value="ECO:0007669"/>
    <property type="project" value="TreeGrafter"/>
</dbReference>
<dbReference type="GO" id="GO:0019843">
    <property type="term" value="F:rRNA binding"/>
    <property type="evidence" value="ECO:0007669"/>
    <property type="project" value="InterPro"/>
</dbReference>
<dbReference type="GO" id="GO:0003735">
    <property type="term" value="F:structural constituent of ribosome"/>
    <property type="evidence" value="ECO:0007669"/>
    <property type="project" value="InterPro"/>
</dbReference>
<dbReference type="GO" id="GO:0002181">
    <property type="term" value="P:cytoplasmic translation"/>
    <property type="evidence" value="ECO:0007669"/>
    <property type="project" value="TreeGrafter"/>
</dbReference>
<dbReference type="FunFam" id="3.90.930.12:FF:000003">
    <property type="entry name" value="60S ribosomal protein L9"/>
    <property type="match status" value="1"/>
</dbReference>
<dbReference type="FunFam" id="3.90.930.12:FF:000005">
    <property type="entry name" value="60S ribosomal protein L9"/>
    <property type="match status" value="1"/>
</dbReference>
<dbReference type="Gene3D" id="3.90.930.12">
    <property type="entry name" value="Ribosomal protein L6, alpha-beta domain"/>
    <property type="match status" value="2"/>
</dbReference>
<dbReference type="InterPro" id="IPR000702">
    <property type="entry name" value="Ribosomal_uL6-like"/>
</dbReference>
<dbReference type="InterPro" id="IPR036789">
    <property type="entry name" value="Ribosomal_uL6-like_a/b-dom_sf"/>
</dbReference>
<dbReference type="InterPro" id="IPR020040">
    <property type="entry name" value="Ribosomal_uL6_a/b-dom"/>
</dbReference>
<dbReference type="InterPro" id="IPR002359">
    <property type="entry name" value="Ribosomal_uL6_CS2"/>
</dbReference>
<dbReference type="PANTHER" id="PTHR11655">
    <property type="entry name" value="60S/50S RIBOSOMAL PROTEIN L6/L9"/>
    <property type="match status" value="1"/>
</dbReference>
<dbReference type="PANTHER" id="PTHR11655:SF46">
    <property type="entry name" value="LARGE RIBOSOMAL SUBUNIT PROTEIN UL6"/>
    <property type="match status" value="1"/>
</dbReference>
<dbReference type="Pfam" id="PF00347">
    <property type="entry name" value="Ribosomal_L6"/>
    <property type="match status" value="2"/>
</dbReference>
<dbReference type="PIRSF" id="PIRSF002162">
    <property type="entry name" value="Ribosomal_L6"/>
    <property type="match status" value="1"/>
</dbReference>
<dbReference type="SUPFAM" id="SSF56053">
    <property type="entry name" value="Ribosomal protein L6"/>
    <property type="match status" value="2"/>
</dbReference>
<dbReference type="PROSITE" id="PS00700">
    <property type="entry name" value="RIBOSOMAL_L6_2"/>
    <property type="match status" value="1"/>
</dbReference>
<comment type="function">
    <text evidence="1">Component of the large ribosomal subunit. The ribosome is a large ribonucleoprotein complex responsible for the synthesis of proteins in the cell.</text>
</comment>
<comment type="subunit">
    <text evidence="1">Component of the large ribosomal subunit.</text>
</comment>
<comment type="subcellular location">
    <subcellularLocation>
        <location evidence="1">Cytoplasm</location>
    </subcellularLocation>
</comment>
<comment type="similarity">
    <text evidence="2">Belongs to the universal ribosomal protein uL6 family.</text>
</comment>